<accession>A2BNV5</accession>
<feature type="chain" id="PRO_0000298838" description="NAD(P)H-quinone oxidoreductase subunit 1">
    <location>
        <begin position="1"/>
        <end position="372"/>
    </location>
</feature>
<feature type="transmembrane region" description="Helical" evidence="1">
    <location>
        <begin position="27"/>
        <end position="47"/>
    </location>
</feature>
<feature type="transmembrane region" description="Helical" evidence="1">
    <location>
        <begin position="97"/>
        <end position="117"/>
    </location>
</feature>
<feature type="transmembrane region" description="Helical" evidence="1">
    <location>
        <begin position="128"/>
        <end position="148"/>
    </location>
</feature>
<feature type="transmembrane region" description="Helical" evidence="1">
    <location>
        <begin position="176"/>
        <end position="196"/>
    </location>
</feature>
<feature type="transmembrane region" description="Helical" evidence="1">
    <location>
        <begin position="204"/>
        <end position="224"/>
    </location>
</feature>
<feature type="transmembrane region" description="Helical" evidence="1">
    <location>
        <begin position="266"/>
        <end position="286"/>
    </location>
</feature>
<feature type="transmembrane region" description="Helical" evidence="1">
    <location>
        <begin position="308"/>
        <end position="328"/>
    </location>
</feature>
<feature type="transmembrane region" description="Helical" evidence="1">
    <location>
        <begin position="347"/>
        <end position="367"/>
    </location>
</feature>
<gene>
    <name evidence="1" type="primary">ndhA</name>
    <name type="ordered locus">A9601_01781</name>
</gene>
<sequence>MEYGLDLEYSFNEFLKGFGLSSEIAHIIWLPLPMLLVLVAAVVGVLVTVWLERKISAAAQQRIGPEYAGALGVLQPIADGLKLLVKEDIIPAKADGILFTAGPILVLVPVILSWLIVPFGQNLLISNVGIGIFLWIALSSIQPIGLLMSGYASNNKYSLLGGLRAAAQSISYEIPLALSVLAIVLMTNSLSTIDIVNQQSGAGILSWNIWRQPVGFIVFWICALAECERLPFDLPEAEEELVAGYQTEYAGMKFALFYLGSYINLILSALLVSILYLGGWGFPVPVELIAKFLNLPINAPFLQVFTASIGIVMTVLKAYLLVFIAILLRWTTPRVRIDQLLDLGWKFLLPISLANLLITAGLKLAFPQFFGG</sequence>
<dbReference type="EC" id="7.1.1.-" evidence="1"/>
<dbReference type="EMBL" id="CP000551">
    <property type="protein sequence ID" value="ABM69466.1"/>
    <property type="molecule type" value="Genomic_DNA"/>
</dbReference>
<dbReference type="RefSeq" id="WP_011817653.1">
    <property type="nucleotide sequence ID" value="NC_008816.1"/>
</dbReference>
<dbReference type="SMR" id="A2BNV5"/>
<dbReference type="STRING" id="146891.A9601_01781"/>
<dbReference type="KEGG" id="pmb:A9601_01781"/>
<dbReference type="eggNOG" id="COG1005">
    <property type="taxonomic scope" value="Bacteria"/>
</dbReference>
<dbReference type="HOGENOM" id="CLU_015134_0_1_3"/>
<dbReference type="OrthoDB" id="9803734at2"/>
<dbReference type="Proteomes" id="UP000002590">
    <property type="component" value="Chromosome"/>
</dbReference>
<dbReference type="GO" id="GO:0031676">
    <property type="term" value="C:plasma membrane-derived thylakoid membrane"/>
    <property type="evidence" value="ECO:0007669"/>
    <property type="project" value="UniProtKB-SubCell"/>
</dbReference>
<dbReference type="GO" id="GO:0003954">
    <property type="term" value="F:NADH dehydrogenase activity"/>
    <property type="evidence" value="ECO:0007669"/>
    <property type="project" value="TreeGrafter"/>
</dbReference>
<dbReference type="GO" id="GO:0016655">
    <property type="term" value="F:oxidoreductase activity, acting on NAD(P)H, quinone or similar compound as acceptor"/>
    <property type="evidence" value="ECO:0007669"/>
    <property type="project" value="UniProtKB-UniRule"/>
</dbReference>
<dbReference type="GO" id="GO:0048038">
    <property type="term" value="F:quinone binding"/>
    <property type="evidence" value="ECO:0007669"/>
    <property type="project" value="UniProtKB-KW"/>
</dbReference>
<dbReference type="GO" id="GO:0009060">
    <property type="term" value="P:aerobic respiration"/>
    <property type="evidence" value="ECO:0007669"/>
    <property type="project" value="TreeGrafter"/>
</dbReference>
<dbReference type="GO" id="GO:0019684">
    <property type="term" value="P:photosynthesis, light reaction"/>
    <property type="evidence" value="ECO:0007669"/>
    <property type="project" value="UniProtKB-UniRule"/>
</dbReference>
<dbReference type="HAMAP" id="MF_01350">
    <property type="entry name" value="NDH1_NuoH"/>
    <property type="match status" value="1"/>
</dbReference>
<dbReference type="InterPro" id="IPR001694">
    <property type="entry name" value="NADH_UbQ_OxRdtase_su1/FPO"/>
</dbReference>
<dbReference type="InterPro" id="IPR018086">
    <property type="entry name" value="NADH_UbQ_OxRdtase_su1_CS"/>
</dbReference>
<dbReference type="NCBIfam" id="NF004741">
    <property type="entry name" value="PRK06076.1-2"/>
    <property type="match status" value="1"/>
</dbReference>
<dbReference type="NCBIfam" id="NF004744">
    <property type="entry name" value="PRK06076.1-5"/>
    <property type="match status" value="1"/>
</dbReference>
<dbReference type="PANTHER" id="PTHR11432">
    <property type="entry name" value="NADH DEHYDROGENASE SUBUNIT 1"/>
    <property type="match status" value="1"/>
</dbReference>
<dbReference type="PANTHER" id="PTHR11432:SF3">
    <property type="entry name" value="NADH-UBIQUINONE OXIDOREDUCTASE CHAIN 1"/>
    <property type="match status" value="1"/>
</dbReference>
<dbReference type="Pfam" id="PF00146">
    <property type="entry name" value="NADHdh"/>
    <property type="match status" value="1"/>
</dbReference>
<dbReference type="PROSITE" id="PS00667">
    <property type="entry name" value="COMPLEX1_ND1_1"/>
    <property type="match status" value="1"/>
</dbReference>
<dbReference type="PROSITE" id="PS00668">
    <property type="entry name" value="COMPLEX1_ND1_2"/>
    <property type="match status" value="1"/>
</dbReference>
<proteinExistence type="inferred from homology"/>
<protein>
    <recommendedName>
        <fullName evidence="1">NAD(P)H-quinone oxidoreductase subunit 1</fullName>
        <ecNumber evidence="1">7.1.1.-</ecNumber>
    </recommendedName>
    <alternativeName>
        <fullName evidence="1">NAD(P)H dehydrogenase I subunit 1</fullName>
    </alternativeName>
    <alternativeName>
        <fullName evidence="1">NDH-1 subunit 1</fullName>
    </alternativeName>
    <alternativeName>
        <fullName evidence="1">NDH-A</fullName>
    </alternativeName>
</protein>
<reference key="1">
    <citation type="journal article" date="2007" name="PLoS Genet.">
        <title>Patterns and implications of gene gain and loss in the evolution of Prochlorococcus.</title>
        <authorList>
            <person name="Kettler G.C."/>
            <person name="Martiny A.C."/>
            <person name="Huang K."/>
            <person name="Zucker J."/>
            <person name="Coleman M.L."/>
            <person name="Rodrigue S."/>
            <person name="Chen F."/>
            <person name="Lapidus A."/>
            <person name="Ferriera S."/>
            <person name="Johnson J."/>
            <person name="Steglich C."/>
            <person name="Church G.M."/>
            <person name="Richardson P."/>
            <person name="Chisholm S.W."/>
        </authorList>
    </citation>
    <scope>NUCLEOTIDE SEQUENCE [LARGE SCALE GENOMIC DNA]</scope>
    <source>
        <strain>AS9601</strain>
    </source>
</reference>
<organism>
    <name type="scientific">Prochlorococcus marinus (strain AS9601)</name>
    <dbReference type="NCBI Taxonomy" id="146891"/>
    <lineage>
        <taxon>Bacteria</taxon>
        <taxon>Bacillati</taxon>
        <taxon>Cyanobacteriota</taxon>
        <taxon>Cyanophyceae</taxon>
        <taxon>Synechococcales</taxon>
        <taxon>Prochlorococcaceae</taxon>
        <taxon>Prochlorococcus</taxon>
    </lineage>
</organism>
<name>NU1C_PROMS</name>
<comment type="function">
    <text evidence="1">NDH-1 shuttles electrons from an unknown electron donor, via FMN and iron-sulfur (Fe-S) centers, to quinones in the respiratory and/or the photosynthetic chain. The immediate electron acceptor for the enzyme in this species is believed to be plastoquinone. Couples the redox reaction to proton translocation, and thus conserves the redox energy in a proton gradient.</text>
</comment>
<comment type="catalytic activity">
    <reaction evidence="1">
        <text>a plastoquinone + NADH + (n+1) H(+)(in) = a plastoquinol + NAD(+) + n H(+)(out)</text>
        <dbReference type="Rhea" id="RHEA:42608"/>
        <dbReference type="Rhea" id="RHEA-COMP:9561"/>
        <dbReference type="Rhea" id="RHEA-COMP:9562"/>
        <dbReference type="ChEBI" id="CHEBI:15378"/>
        <dbReference type="ChEBI" id="CHEBI:17757"/>
        <dbReference type="ChEBI" id="CHEBI:57540"/>
        <dbReference type="ChEBI" id="CHEBI:57945"/>
        <dbReference type="ChEBI" id="CHEBI:62192"/>
    </reaction>
</comment>
<comment type="catalytic activity">
    <reaction evidence="1">
        <text>a plastoquinone + NADPH + (n+1) H(+)(in) = a plastoquinol + NADP(+) + n H(+)(out)</text>
        <dbReference type="Rhea" id="RHEA:42612"/>
        <dbReference type="Rhea" id="RHEA-COMP:9561"/>
        <dbReference type="Rhea" id="RHEA-COMP:9562"/>
        <dbReference type="ChEBI" id="CHEBI:15378"/>
        <dbReference type="ChEBI" id="CHEBI:17757"/>
        <dbReference type="ChEBI" id="CHEBI:57783"/>
        <dbReference type="ChEBI" id="CHEBI:58349"/>
        <dbReference type="ChEBI" id="CHEBI:62192"/>
    </reaction>
</comment>
<comment type="subunit">
    <text evidence="1">NDH-1 is composed of at least 11 different subunits.</text>
</comment>
<comment type="subcellular location">
    <subcellularLocation>
        <location evidence="1">Cellular thylakoid membrane</location>
        <topology evidence="1">Multi-pass membrane protein</topology>
    </subcellularLocation>
</comment>
<comment type="similarity">
    <text evidence="1">Belongs to the complex I subunit 1 family.</text>
</comment>
<evidence type="ECO:0000255" key="1">
    <source>
        <dbReference type="HAMAP-Rule" id="MF_01350"/>
    </source>
</evidence>
<keyword id="KW-0472">Membrane</keyword>
<keyword id="KW-0520">NAD</keyword>
<keyword id="KW-0521">NADP</keyword>
<keyword id="KW-0618">Plastoquinone</keyword>
<keyword id="KW-0874">Quinone</keyword>
<keyword id="KW-0793">Thylakoid</keyword>
<keyword id="KW-1278">Translocase</keyword>
<keyword id="KW-0812">Transmembrane</keyword>
<keyword id="KW-1133">Transmembrane helix</keyword>